<dbReference type="EMBL" id="U70214">
    <property type="protein sequence ID" value="AAB08665.1"/>
    <property type="molecule type" value="Genomic_DNA"/>
</dbReference>
<dbReference type="EMBL" id="U00096">
    <property type="protein sequence ID" value="AAC73349.1"/>
    <property type="molecule type" value="Genomic_DNA"/>
</dbReference>
<dbReference type="EMBL" id="AP009048">
    <property type="protein sequence ID" value="BAA77914.1"/>
    <property type="molecule type" value="Genomic_DNA"/>
</dbReference>
<dbReference type="PIR" id="F64749">
    <property type="entry name" value="F64749"/>
</dbReference>
<dbReference type="RefSeq" id="NP_414780.1">
    <property type="nucleotide sequence ID" value="NC_000913.3"/>
</dbReference>
<dbReference type="RefSeq" id="WP_000070395.1">
    <property type="nucleotide sequence ID" value="NZ_LN832404.1"/>
</dbReference>
<dbReference type="SMR" id="Q47684"/>
<dbReference type="BioGRID" id="4263051">
    <property type="interactions" value="43"/>
</dbReference>
<dbReference type="FunCoup" id="Q47684">
    <property type="interactions" value="15"/>
</dbReference>
<dbReference type="STRING" id="511145.b0246"/>
<dbReference type="PaxDb" id="511145-b0246"/>
<dbReference type="EnsemblBacteria" id="AAC73349">
    <property type="protein sequence ID" value="AAC73349"/>
    <property type="gene ID" value="b0246"/>
</dbReference>
<dbReference type="GeneID" id="944929"/>
<dbReference type="KEGG" id="ecj:JW0235"/>
<dbReference type="KEGG" id="eco:b0246"/>
<dbReference type="KEGG" id="ecoc:C3026_01170"/>
<dbReference type="KEGG" id="ecoc:C3026_23905"/>
<dbReference type="PATRIC" id="fig|1411691.4.peg.2037"/>
<dbReference type="EchoBASE" id="EB3119"/>
<dbReference type="eggNOG" id="ENOG5032T1E">
    <property type="taxonomic scope" value="Bacteria"/>
</dbReference>
<dbReference type="HOGENOM" id="CLU_144696_1_0_6"/>
<dbReference type="InParanoid" id="Q47684"/>
<dbReference type="OMA" id="PHFIRQM"/>
<dbReference type="OrthoDB" id="5588975at2"/>
<dbReference type="PhylomeDB" id="Q47684"/>
<dbReference type="BioCyc" id="EcoCyc:G6121-MONOMER"/>
<dbReference type="PRO" id="PR:Q47684"/>
<dbReference type="Proteomes" id="UP000000625">
    <property type="component" value="Chromosome"/>
</dbReference>
<dbReference type="GO" id="GO:0051495">
    <property type="term" value="P:positive regulation of cytoskeleton organization"/>
    <property type="evidence" value="ECO:0007669"/>
    <property type="project" value="InterPro"/>
</dbReference>
<dbReference type="Gene3D" id="3.30.450.20">
    <property type="entry name" value="PAS domain"/>
    <property type="match status" value="1"/>
</dbReference>
<dbReference type="InterPro" id="IPR009320">
    <property type="entry name" value="Antitoxin_CbeA"/>
</dbReference>
<dbReference type="InterPro" id="IPR038025">
    <property type="entry name" value="CbeA_sf"/>
</dbReference>
<dbReference type="Pfam" id="PF06154">
    <property type="entry name" value="CbeA_antitoxin"/>
    <property type="match status" value="1"/>
</dbReference>
<dbReference type="SUPFAM" id="SSF143737">
    <property type="entry name" value="YeeU-like"/>
    <property type="match status" value="1"/>
</dbReference>
<keyword id="KW-1185">Reference proteome</keyword>
<keyword id="KW-1277">Toxin-antitoxin system</keyword>
<sequence>MSNPTRGLQREITLRLGARLVQEGNRLHYLADRASITGKFSDIECRKLDETFPHFILQMESMLTTGELSPHHAHCVTLYHNDLTCEADTLGSCGYVYIAIYPTQR</sequence>
<organism>
    <name type="scientific">Escherichia coli (strain K12)</name>
    <dbReference type="NCBI Taxonomy" id="83333"/>
    <lineage>
        <taxon>Bacteria</taxon>
        <taxon>Pseudomonadati</taxon>
        <taxon>Pseudomonadota</taxon>
        <taxon>Gammaproteobacteria</taxon>
        <taxon>Enterobacterales</taxon>
        <taxon>Enterobacteriaceae</taxon>
        <taxon>Escherichia</taxon>
    </lineage>
</organism>
<accession>Q47684</accession>
<protein>
    <recommendedName>
        <fullName evidence="3">Antitoxin YafW</fullName>
    </recommendedName>
</protein>
<reference key="1">
    <citation type="submission" date="1996-02" db="EMBL/GenBank/DDBJ databases">
        <title>Systematic sequencing of the Escherichia coli genome: analysis of the 4.0 - 6.0 min (189,987 - 281,416bp) region.</title>
        <authorList>
            <person name="Takemoto K."/>
            <person name="Mori H."/>
            <person name="Murayama N."/>
            <person name="Kataoka K."/>
            <person name="Yano M."/>
            <person name="Itoh T."/>
            <person name="Yamamoto Y."/>
            <person name="Inokuchi H."/>
            <person name="Miki T."/>
            <person name="Hatada E."/>
            <person name="Fukuda R."/>
            <person name="Ichihara S."/>
            <person name="Mizuno T."/>
            <person name="Makino K."/>
            <person name="Nakata A."/>
            <person name="Yura T."/>
            <person name="Sampei G."/>
            <person name="Mizobuchi K."/>
        </authorList>
    </citation>
    <scope>NUCLEOTIDE SEQUENCE [LARGE SCALE GENOMIC DNA]</scope>
    <source>
        <strain>K12 / W3110 / ATCC 27325 / DSM 5911</strain>
    </source>
</reference>
<reference key="2">
    <citation type="submission" date="1997-01" db="EMBL/GenBank/DDBJ databases">
        <title>Sequence of minutes 4-25 of Escherichia coli.</title>
        <authorList>
            <person name="Chung E."/>
            <person name="Allen E."/>
            <person name="Araujo R."/>
            <person name="Aparicio A.M."/>
            <person name="Davis K."/>
            <person name="Duncan M."/>
            <person name="Federspiel N."/>
            <person name="Hyman R."/>
            <person name="Kalman S."/>
            <person name="Komp C."/>
            <person name="Kurdi O."/>
            <person name="Lew H."/>
            <person name="Lin D."/>
            <person name="Namath A."/>
            <person name="Oefner P."/>
            <person name="Roberts D."/>
            <person name="Schramm S."/>
            <person name="Davis R.W."/>
        </authorList>
    </citation>
    <scope>NUCLEOTIDE SEQUENCE [LARGE SCALE GENOMIC DNA]</scope>
    <source>
        <strain>K12 / MG1655 / ATCC 47076</strain>
    </source>
</reference>
<reference key="3">
    <citation type="journal article" date="1997" name="Science">
        <title>The complete genome sequence of Escherichia coli K-12.</title>
        <authorList>
            <person name="Blattner F.R."/>
            <person name="Plunkett G. III"/>
            <person name="Bloch C.A."/>
            <person name="Perna N.T."/>
            <person name="Burland V."/>
            <person name="Riley M."/>
            <person name="Collado-Vides J."/>
            <person name="Glasner J.D."/>
            <person name="Rode C.K."/>
            <person name="Mayhew G.F."/>
            <person name="Gregor J."/>
            <person name="Davis N.W."/>
            <person name="Kirkpatrick H.A."/>
            <person name="Goeden M.A."/>
            <person name="Rose D.J."/>
            <person name="Mau B."/>
            <person name="Shao Y."/>
        </authorList>
    </citation>
    <scope>NUCLEOTIDE SEQUENCE [LARGE SCALE GENOMIC DNA]</scope>
    <source>
        <strain>K12 / MG1655 / ATCC 47076</strain>
    </source>
</reference>
<reference key="4">
    <citation type="journal article" date="2006" name="Mol. Syst. Biol.">
        <title>Highly accurate genome sequences of Escherichia coli K-12 strains MG1655 and W3110.</title>
        <authorList>
            <person name="Hayashi K."/>
            <person name="Morooka N."/>
            <person name="Yamamoto Y."/>
            <person name="Fujita K."/>
            <person name="Isono K."/>
            <person name="Choi S."/>
            <person name="Ohtsubo E."/>
            <person name="Baba T."/>
            <person name="Wanner B.L."/>
            <person name="Mori H."/>
            <person name="Horiuchi T."/>
        </authorList>
    </citation>
    <scope>NUCLEOTIDE SEQUENCE [LARGE SCALE GENOMIC DNA]</scope>
    <source>
        <strain>K12 / W3110 / ATCC 27325 / DSM 5911</strain>
    </source>
</reference>
<reference key="5">
    <citation type="journal article" date="2003" name="J. Bacteriol.">
        <title>A novel family of Escherichia coli toxin-antitoxin gene pairs.</title>
        <authorList>
            <person name="Brown J.M."/>
            <person name="Shaw K.J."/>
        </authorList>
    </citation>
    <scope>FUNCTION AS AN ANTITOXIN</scope>
    <source>
        <strain>K12 / MG1655 / ATCC 47076</strain>
    </source>
</reference>
<reference key="6">
    <citation type="journal article" date="2017" name="Toxins">
        <title>Interaction of type IV toxin/antitoxin systems in cryptic prophages of Escherichia coli K-12.</title>
        <authorList>
            <person name="Wen Z."/>
            <person name="Wang P."/>
            <person name="Sun C."/>
            <person name="Guo Y."/>
            <person name="Wang X."/>
        </authorList>
    </citation>
    <scope>FUNCTION AS AN ANTITOXIN</scope>
    <scope>INDUCTION</scope>
    <scope>DISRUPTION PHENOTYPE</scope>
    <source>
        <strain>K12 / BW25113</strain>
    </source>
</reference>
<feature type="chain" id="PRO_0000168544" description="Antitoxin YafW">
    <location>
        <begin position="1"/>
        <end position="105"/>
    </location>
</feature>
<name>YAFW_ECOLI</name>
<proteinExistence type="evidence at protein level"/>
<evidence type="ECO:0000269" key="1">
    <source>
    </source>
</evidence>
<evidence type="ECO:0000269" key="2">
    <source>
    </source>
</evidence>
<evidence type="ECO:0000303" key="3">
    <source>
    </source>
</evidence>
<evidence type="ECO:0000305" key="4"/>
<gene>
    <name type="primary">yafW</name>
    <name type="ordered locus">b0246</name>
    <name type="ordered locus">JW0235</name>
</gene>
<comment type="function">
    <text evidence="1 2">Antitoxin component of a type IV toxin-antitoxin (TA) system. Antitoxin that counteracts the effect of cognate toxin YkfI (PubMed:14594833, PubMed:28257056). It does not seem to bind to the cognate toxin but instead induces toxin loss by an unknown mechanism (PubMed:14594833). Co-overexpression of toxin YkfI and antitoxin YafW leads to formation of elongated cells (PubMed:28257056).</text>
</comment>
<comment type="induction">
    <text evidence="2">Expressed in mid-log phase at considerably lower levels than antitoxin relB.</text>
</comment>
<comment type="disruption phenotype">
    <text evidence="2">Single deletion has no effect on expression of cognate toxin ykfI i.e. the probable operon is not autoregulatory (PubMed:28257056). Deletion of 3 type IV antitoxin genes (cbeA, yafW, yfjZ) has no effect on cell growth (PubMed:28257056).</text>
</comment>
<comment type="miscellaneous">
    <text evidence="4">Encoded in prophage CP4-6.</text>
</comment>
<comment type="similarity">
    <text evidence="4">Belongs to the CbeA/YafW/YfjZ antitoxin family.</text>
</comment>